<sequence>MLSLVLCFFVMFLLGVAVVVLSPSPYFSALGLVFVAVSGCFIVLYHGGTFLSLVLVLLYLGGMMVVFVYSAALAADPYPEVLGGRVIWFFVICVLCICFAGYMSFNDFFLDVSVACEGADYTGGIFGAEWLGVTTFYEVGLILVLAGWALLVCLFSVLVVVRGVNRGALRAV</sequence>
<reference key="1">
    <citation type="journal article" date="1995" name="Genetics">
        <title>Complete sequence of a sea lamprey (Petromyzon marinus) mitochondrial genome: early establishment of the vertebrate genome organization.</title>
        <authorList>
            <person name="Lee W.J."/>
            <person name="Kocher T.D."/>
        </authorList>
    </citation>
    <scope>NUCLEOTIDE SEQUENCE [GENOMIC DNA]</scope>
</reference>
<organism>
    <name type="scientific">Petromyzon marinus</name>
    <name type="common">Sea lamprey</name>
    <dbReference type="NCBI Taxonomy" id="7757"/>
    <lineage>
        <taxon>Eukaryota</taxon>
        <taxon>Metazoa</taxon>
        <taxon>Chordata</taxon>
        <taxon>Craniata</taxon>
        <taxon>Vertebrata</taxon>
        <taxon>Cyclostomata</taxon>
        <taxon>Hyperoartia</taxon>
        <taxon>Petromyzontiformes</taxon>
        <taxon>Petromyzontidae</taxon>
        <taxon>Petromyzon</taxon>
    </lineage>
</organism>
<dbReference type="EC" id="7.1.1.2"/>
<dbReference type="EMBL" id="U11880">
    <property type="protein sequence ID" value="AAB08749.1"/>
    <property type="molecule type" value="Genomic_DNA"/>
</dbReference>
<dbReference type="PIR" id="S55015">
    <property type="entry name" value="S55015"/>
</dbReference>
<dbReference type="RefSeq" id="NP_008159.1">
    <property type="nucleotide sequence ID" value="NC_001626.1"/>
</dbReference>
<dbReference type="SMR" id="Q35544"/>
<dbReference type="STRING" id="7757.ENSPMAP00000011442"/>
<dbReference type="Ensembl" id="ENSPMAT00000014139.1">
    <property type="protein sequence ID" value="ENSPMAP00000011442.1"/>
    <property type="gene ID" value="ENSPMAG00000013112.1"/>
</dbReference>
<dbReference type="GeneID" id="807804"/>
<dbReference type="KEGG" id="pmrn:807804"/>
<dbReference type="CTD" id="4541"/>
<dbReference type="GeneTree" id="ENSGT00390000003988"/>
<dbReference type="HOGENOM" id="CLU_129718_0_0_1"/>
<dbReference type="OMA" id="MIAVACN"/>
<dbReference type="OrthoDB" id="9837654at2759"/>
<dbReference type="Proteomes" id="UP001318040">
    <property type="component" value="Mitochondrion MT"/>
</dbReference>
<dbReference type="GO" id="GO:0031966">
    <property type="term" value="C:mitochondrial membrane"/>
    <property type="evidence" value="ECO:0007669"/>
    <property type="project" value="UniProtKB-SubCell"/>
</dbReference>
<dbReference type="GO" id="GO:0008137">
    <property type="term" value="F:NADH dehydrogenase (ubiquinone) activity"/>
    <property type="evidence" value="ECO:0007669"/>
    <property type="project" value="UniProtKB-EC"/>
</dbReference>
<dbReference type="Gene3D" id="1.20.120.1200">
    <property type="entry name" value="NADH-ubiquinone/plastoquinone oxidoreductase chain 6, subunit NuoJ"/>
    <property type="match status" value="1"/>
</dbReference>
<dbReference type="InterPro" id="IPR050269">
    <property type="entry name" value="ComplexI_Subunit6"/>
</dbReference>
<dbReference type="InterPro" id="IPR001457">
    <property type="entry name" value="NADH_UbQ/plastoQ_OxRdtase_su6"/>
</dbReference>
<dbReference type="InterPro" id="IPR042106">
    <property type="entry name" value="Nuo/plastoQ_OxRdtase_6_NuoJ"/>
</dbReference>
<dbReference type="PANTHER" id="PTHR11435">
    <property type="entry name" value="NADH UBIQUINONE OXIDOREDUCTASE SUBUNIT ND6"/>
    <property type="match status" value="1"/>
</dbReference>
<dbReference type="PANTHER" id="PTHR11435:SF1">
    <property type="entry name" value="NADH-UBIQUINONE OXIDOREDUCTASE CHAIN 6"/>
    <property type="match status" value="1"/>
</dbReference>
<dbReference type="Pfam" id="PF00499">
    <property type="entry name" value="Oxidored_q3"/>
    <property type="match status" value="1"/>
</dbReference>
<proteinExistence type="inferred from homology"/>
<accession>Q35544</accession>
<comment type="function">
    <text evidence="1">Core subunit of the mitochondrial membrane respiratory chain NADH dehydrogenase (Complex I) that is believed to belong to the minimal assembly required for catalysis. Complex I functions in the transfer of electrons from NADH to the respiratory chain. The immediate electron acceptor for the enzyme is believed to be ubiquinone (By similarity).</text>
</comment>
<comment type="catalytic activity">
    <reaction>
        <text>a ubiquinone + NADH + 5 H(+)(in) = a ubiquinol + NAD(+) + 4 H(+)(out)</text>
        <dbReference type="Rhea" id="RHEA:29091"/>
        <dbReference type="Rhea" id="RHEA-COMP:9565"/>
        <dbReference type="Rhea" id="RHEA-COMP:9566"/>
        <dbReference type="ChEBI" id="CHEBI:15378"/>
        <dbReference type="ChEBI" id="CHEBI:16389"/>
        <dbReference type="ChEBI" id="CHEBI:17976"/>
        <dbReference type="ChEBI" id="CHEBI:57540"/>
        <dbReference type="ChEBI" id="CHEBI:57945"/>
        <dbReference type="EC" id="7.1.1.2"/>
    </reaction>
</comment>
<comment type="subcellular location">
    <subcellularLocation>
        <location evidence="3">Mitochondrion membrane</location>
        <topology evidence="3">Multi-pass membrane protein</topology>
    </subcellularLocation>
</comment>
<comment type="similarity">
    <text evidence="3">Belongs to the complex I subunit 6 family.</text>
</comment>
<name>NU6M_PETMA</name>
<protein>
    <recommendedName>
        <fullName>NADH-ubiquinone oxidoreductase chain 6</fullName>
        <ecNumber>7.1.1.2</ecNumber>
    </recommendedName>
    <alternativeName>
        <fullName>NADH dehydrogenase subunit 6</fullName>
    </alternativeName>
</protein>
<gene>
    <name type="primary">MT-ND6</name>
    <name type="synonym">MTND6</name>
    <name type="synonym">NADH6</name>
    <name type="synonym">ND6</name>
</gene>
<geneLocation type="mitochondrion"/>
<evidence type="ECO:0000250" key="1"/>
<evidence type="ECO:0000255" key="2"/>
<evidence type="ECO:0000305" key="3"/>
<keyword id="KW-0249">Electron transport</keyword>
<keyword id="KW-0472">Membrane</keyword>
<keyword id="KW-0496">Mitochondrion</keyword>
<keyword id="KW-0520">NAD</keyword>
<keyword id="KW-0679">Respiratory chain</keyword>
<keyword id="KW-1278">Translocase</keyword>
<keyword id="KW-0812">Transmembrane</keyword>
<keyword id="KW-1133">Transmembrane helix</keyword>
<keyword id="KW-0813">Transport</keyword>
<keyword id="KW-0830">Ubiquinone</keyword>
<feature type="chain" id="PRO_0000118314" description="NADH-ubiquinone oxidoreductase chain 6">
    <location>
        <begin position="1"/>
        <end position="172"/>
    </location>
</feature>
<feature type="transmembrane region" description="Helical" evidence="2">
    <location>
        <begin position="1"/>
        <end position="21"/>
    </location>
</feature>
<feature type="transmembrane region" description="Helical" evidence="2">
    <location>
        <begin position="25"/>
        <end position="45"/>
    </location>
</feature>
<feature type="transmembrane region" description="Helical" evidence="2">
    <location>
        <begin position="48"/>
        <end position="68"/>
    </location>
</feature>
<feature type="transmembrane region" description="Helical" evidence="2">
    <location>
        <begin position="86"/>
        <end position="106"/>
    </location>
</feature>
<feature type="transmembrane region" description="Helical" evidence="2">
    <location>
        <begin position="108"/>
        <end position="128"/>
    </location>
</feature>
<feature type="transmembrane region" description="Helical" evidence="2">
    <location>
        <begin position="141"/>
        <end position="161"/>
    </location>
</feature>